<organism>
    <name type="scientific">Ranoidea dahlii</name>
    <name type="common">Dahl's aquatic frog</name>
    <name type="synonym">Litoria dahlii</name>
    <dbReference type="NCBI Taxonomy" id="299727"/>
    <lineage>
        <taxon>Eukaryota</taxon>
        <taxon>Metazoa</taxon>
        <taxon>Chordata</taxon>
        <taxon>Craniata</taxon>
        <taxon>Vertebrata</taxon>
        <taxon>Euteleostomi</taxon>
        <taxon>Amphibia</taxon>
        <taxon>Batrachia</taxon>
        <taxon>Anura</taxon>
        <taxon>Neobatrachia</taxon>
        <taxon>Hyloidea</taxon>
        <taxon>Hylidae</taxon>
        <taxon>Pelodryadinae</taxon>
        <taxon>Ranoidea</taxon>
    </lineage>
</organism>
<sequence length="21" mass="2190">GLLASLGKVFGGYLAEKLKPK</sequence>
<name>DAH56_RANDH</name>
<evidence type="ECO:0000269" key="1">
    <source>
    </source>
</evidence>
<evidence type="ECO:0000305" key="2"/>
<feature type="peptide" id="PRO_0000043782" description="Dahlein-5.6">
    <location>
        <begin position="1"/>
        <end position="21"/>
    </location>
</feature>
<comment type="function">
    <text evidence="1">Has no antimicrobial activity. Strongly inhibits the formation of NO by neuronal nitric oxide synthase at micromolar concentrations.</text>
</comment>
<comment type="subcellular location">
    <subcellularLocation>
        <location evidence="1">Secreted</location>
    </subcellularLocation>
</comment>
<comment type="tissue specificity">
    <text evidence="1">Expressed by the skin dorsal glands.</text>
</comment>
<comment type="mass spectrometry" mass="2187.0" method="Electrospray" evidence="1"/>
<proteinExistence type="evidence at protein level"/>
<accession>P84272</accession>
<keyword id="KW-0878">Amphibian defense peptide</keyword>
<keyword id="KW-0903">Direct protein sequencing</keyword>
<keyword id="KW-0964">Secreted</keyword>
<dbReference type="GO" id="GO:0005576">
    <property type="term" value="C:extracellular region"/>
    <property type="evidence" value="ECO:0000314"/>
    <property type="project" value="UniProtKB"/>
</dbReference>
<dbReference type="GO" id="GO:0030235">
    <property type="term" value="F:nitric-oxide synthase regulator activity"/>
    <property type="evidence" value="ECO:0000314"/>
    <property type="project" value="UniProtKB"/>
</dbReference>
<dbReference type="GO" id="GO:0006952">
    <property type="term" value="P:defense response"/>
    <property type="evidence" value="ECO:0007669"/>
    <property type="project" value="UniProtKB-KW"/>
</dbReference>
<dbReference type="GO" id="GO:0051001">
    <property type="term" value="P:negative regulation of nitric-oxide synthase activity"/>
    <property type="evidence" value="ECO:0000314"/>
    <property type="project" value="UniProtKB"/>
</dbReference>
<protein>
    <recommendedName>
        <fullName>Dahlein-5.6</fullName>
    </recommendedName>
</protein>
<reference evidence="2" key="1">
    <citation type="journal article" date="2001" name="Rapid Commun. Mass Spectrom.">
        <title>Bioactive dahlein peptides from the skin secretions of the Australian aquatic frog Litoria dahlii: sequence determination by electrospray mass spectrometry.</title>
        <authorList>
            <person name="Wegener K.L."/>
            <person name="Brinkworth C.S."/>
            <person name="Bowie J.H."/>
            <person name="Wallace J.C."/>
            <person name="Tyler M.J."/>
        </authorList>
    </citation>
    <scope>PROTEIN SEQUENCE</scope>
    <scope>FUNCTION</scope>
    <scope>SUBCELLULAR LOCATION</scope>
    <scope>TISSUE SPECIFICITY</scope>
    <scope>MASS SPECTROMETRY</scope>
    <source>
        <tissue evidence="1">Skin secretion</tissue>
    </source>
</reference>